<reference key="1">
    <citation type="journal article" date="2007" name="Appl. Environ. Microbiol.">
        <title>Genome sequence of the cellulolytic gliding bacterium Cytophaga hutchinsonii.</title>
        <authorList>
            <person name="Xie G."/>
            <person name="Bruce D.C."/>
            <person name="Challacombe J.F."/>
            <person name="Chertkov O."/>
            <person name="Detter J.C."/>
            <person name="Gilna P."/>
            <person name="Han C.S."/>
            <person name="Lucas S."/>
            <person name="Misra M."/>
            <person name="Myers G.L."/>
            <person name="Richardson P."/>
            <person name="Tapia R."/>
            <person name="Thayer N."/>
            <person name="Thompson L.S."/>
            <person name="Brettin T.S."/>
            <person name="Henrissat B."/>
            <person name="Wilson D.B."/>
            <person name="McBride M.J."/>
        </authorList>
    </citation>
    <scope>NUCLEOTIDE SEQUENCE [LARGE SCALE GENOMIC DNA]</scope>
    <source>
        <strain>ATCC 33406 / DSM 1761 / JCM 20678 / CIP 103989 / IAM 12607 / NBRC 15051 / NCIMB 9469 / D465</strain>
    </source>
</reference>
<comment type="function">
    <text evidence="1">Carrier of the growing fatty acid chain in fatty acid biosynthesis.</text>
</comment>
<comment type="pathway">
    <text evidence="1">Lipid metabolism; fatty acid biosynthesis.</text>
</comment>
<comment type="subcellular location">
    <subcellularLocation>
        <location evidence="1">Cytoplasm</location>
    </subcellularLocation>
</comment>
<comment type="PTM">
    <text evidence="1">4'-phosphopantetheine is transferred from CoA to a specific serine of apo-ACP by AcpS. This modification is essential for activity because fatty acids are bound in thioester linkage to the sulfhydryl of the prosthetic group.</text>
</comment>
<comment type="similarity">
    <text evidence="1">Belongs to the acyl carrier protein (ACP) family.</text>
</comment>
<dbReference type="EMBL" id="CP000383">
    <property type="protein sequence ID" value="ABG58669.1"/>
    <property type="molecule type" value="Genomic_DNA"/>
</dbReference>
<dbReference type="RefSeq" id="WP_011584784.1">
    <property type="nucleotide sequence ID" value="NZ_FPJX01000006.1"/>
</dbReference>
<dbReference type="SMR" id="Q11V97"/>
<dbReference type="STRING" id="269798.CHU_1398"/>
<dbReference type="KEGG" id="chu:CHU_1398"/>
<dbReference type="eggNOG" id="COG0236">
    <property type="taxonomic scope" value="Bacteria"/>
</dbReference>
<dbReference type="HOGENOM" id="CLU_108696_5_1_10"/>
<dbReference type="OrthoDB" id="9804551at2"/>
<dbReference type="UniPathway" id="UPA00094"/>
<dbReference type="Proteomes" id="UP000001822">
    <property type="component" value="Chromosome"/>
</dbReference>
<dbReference type="GO" id="GO:0005829">
    <property type="term" value="C:cytosol"/>
    <property type="evidence" value="ECO:0007669"/>
    <property type="project" value="TreeGrafter"/>
</dbReference>
<dbReference type="GO" id="GO:0016020">
    <property type="term" value="C:membrane"/>
    <property type="evidence" value="ECO:0007669"/>
    <property type="project" value="GOC"/>
</dbReference>
<dbReference type="GO" id="GO:0000035">
    <property type="term" value="F:acyl binding"/>
    <property type="evidence" value="ECO:0007669"/>
    <property type="project" value="TreeGrafter"/>
</dbReference>
<dbReference type="GO" id="GO:0000036">
    <property type="term" value="F:acyl carrier activity"/>
    <property type="evidence" value="ECO:0007669"/>
    <property type="project" value="UniProtKB-UniRule"/>
</dbReference>
<dbReference type="GO" id="GO:0009245">
    <property type="term" value="P:lipid A biosynthetic process"/>
    <property type="evidence" value="ECO:0007669"/>
    <property type="project" value="TreeGrafter"/>
</dbReference>
<dbReference type="FunFam" id="1.10.1200.10:FF:000001">
    <property type="entry name" value="Acyl carrier protein"/>
    <property type="match status" value="1"/>
</dbReference>
<dbReference type="Gene3D" id="1.10.1200.10">
    <property type="entry name" value="ACP-like"/>
    <property type="match status" value="1"/>
</dbReference>
<dbReference type="HAMAP" id="MF_01217">
    <property type="entry name" value="Acyl_carrier"/>
    <property type="match status" value="1"/>
</dbReference>
<dbReference type="InterPro" id="IPR003231">
    <property type="entry name" value="ACP"/>
</dbReference>
<dbReference type="InterPro" id="IPR036736">
    <property type="entry name" value="ACP-like_sf"/>
</dbReference>
<dbReference type="InterPro" id="IPR009081">
    <property type="entry name" value="PP-bd_ACP"/>
</dbReference>
<dbReference type="InterPro" id="IPR006162">
    <property type="entry name" value="Ppantetheine_attach_site"/>
</dbReference>
<dbReference type="NCBIfam" id="TIGR00517">
    <property type="entry name" value="acyl_carrier"/>
    <property type="match status" value="1"/>
</dbReference>
<dbReference type="NCBIfam" id="NF002148">
    <property type="entry name" value="PRK00982.1-2"/>
    <property type="match status" value="1"/>
</dbReference>
<dbReference type="NCBIfam" id="NF002149">
    <property type="entry name" value="PRK00982.1-3"/>
    <property type="match status" value="1"/>
</dbReference>
<dbReference type="NCBIfam" id="NF002150">
    <property type="entry name" value="PRK00982.1-4"/>
    <property type="match status" value="1"/>
</dbReference>
<dbReference type="NCBIfam" id="NF002151">
    <property type="entry name" value="PRK00982.1-5"/>
    <property type="match status" value="1"/>
</dbReference>
<dbReference type="PANTHER" id="PTHR20863">
    <property type="entry name" value="ACYL CARRIER PROTEIN"/>
    <property type="match status" value="1"/>
</dbReference>
<dbReference type="PANTHER" id="PTHR20863:SF76">
    <property type="entry name" value="CARRIER DOMAIN-CONTAINING PROTEIN"/>
    <property type="match status" value="1"/>
</dbReference>
<dbReference type="Pfam" id="PF00550">
    <property type="entry name" value="PP-binding"/>
    <property type="match status" value="1"/>
</dbReference>
<dbReference type="SUPFAM" id="SSF47336">
    <property type="entry name" value="ACP-like"/>
    <property type="match status" value="1"/>
</dbReference>
<dbReference type="PROSITE" id="PS50075">
    <property type="entry name" value="CARRIER"/>
    <property type="match status" value="1"/>
</dbReference>
<dbReference type="PROSITE" id="PS00012">
    <property type="entry name" value="PHOSPHOPANTETHEINE"/>
    <property type="match status" value="1"/>
</dbReference>
<organism>
    <name type="scientific">Cytophaga hutchinsonii (strain ATCC 33406 / DSM 1761 / CIP 103989 / NBRC 15051 / NCIMB 9469 / D465)</name>
    <dbReference type="NCBI Taxonomy" id="269798"/>
    <lineage>
        <taxon>Bacteria</taxon>
        <taxon>Pseudomonadati</taxon>
        <taxon>Bacteroidota</taxon>
        <taxon>Cytophagia</taxon>
        <taxon>Cytophagales</taxon>
        <taxon>Cytophagaceae</taxon>
        <taxon>Cytophaga</taxon>
    </lineage>
</organism>
<name>ACP_CYTH3</name>
<sequence>MSEIAQKVKSIIVEKLGVEESEVTTEASFTNDLGADSLDTVELIMEFEKEFNISIPDEQAENITTVGQAIAYLEQHVK</sequence>
<accession>Q11V97</accession>
<keyword id="KW-0963">Cytoplasm</keyword>
<keyword id="KW-0275">Fatty acid biosynthesis</keyword>
<keyword id="KW-0276">Fatty acid metabolism</keyword>
<keyword id="KW-0444">Lipid biosynthesis</keyword>
<keyword id="KW-0443">Lipid metabolism</keyword>
<keyword id="KW-0596">Phosphopantetheine</keyword>
<keyword id="KW-0597">Phosphoprotein</keyword>
<keyword id="KW-1185">Reference proteome</keyword>
<proteinExistence type="inferred from homology"/>
<gene>
    <name evidence="1" type="primary">acpP</name>
    <name type="ordered locus">CHU_1398</name>
</gene>
<evidence type="ECO:0000255" key="1">
    <source>
        <dbReference type="HAMAP-Rule" id="MF_01217"/>
    </source>
</evidence>
<evidence type="ECO:0000255" key="2">
    <source>
        <dbReference type="PROSITE-ProRule" id="PRU00258"/>
    </source>
</evidence>
<protein>
    <recommendedName>
        <fullName evidence="1">Acyl carrier protein</fullName>
        <shortName evidence="1">ACP</shortName>
    </recommendedName>
</protein>
<feature type="chain" id="PRO_1000066595" description="Acyl carrier protein">
    <location>
        <begin position="1"/>
        <end position="78"/>
    </location>
</feature>
<feature type="domain" description="Carrier" evidence="2">
    <location>
        <begin position="2"/>
        <end position="77"/>
    </location>
</feature>
<feature type="modified residue" description="O-(pantetheine 4'-phosphoryl)serine" evidence="2">
    <location>
        <position position="37"/>
    </location>
</feature>